<gene>
    <name evidence="1" type="primary">aspS</name>
    <name type="ordered locus">Cpar_1340</name>
</gene>
<dbReference type="EC" id="6.1.1.23" evidence="1"/>
<dbReference type="EMBL" id="CP001099">
    <property type="protein sequence ID" value="ACF11743.1"/>
    <property type="molecule type" value="Genomic_DNA"/>
</dbReference>
<dbReference type="RefSeq" id="WP_012502576.1">
    <property type="nucleotide sequence ID" value="NC_011027.1"/>
</dbReference>
<dbReference type="SMR" id="B3QP90"/>
<dbReference type="STRING" id="517417.Cpar_1340"/>
<dbReference type="KEGG" id="cpc:Cpar_1340"/>
<dbReference type="eggNOG" id="COG0173">
    <property type="taxonomic scope" value="Bacteria"/>
</dbReference>
<dbReference type="HOGENOM" id="CLU_014330_3_2_10"/>
<dbReference type="OrthoDB" id="9802326at2"/>
<dbReference type="Proteomes" id="UP000008811">
    <property type="component" value="Chromosome"/>
</dbReference>
<dbReference type="GO" id="GO:0005737">
    <property type="term" value="C:cytoplasm"/>
    <property type="evidence" value="ECO:0007669"/>
    <property type="project" value="UniProtKB-SubCell"/>
</dbReference>
<dbReference type="GO" id="GO:0004815">
    <property type="term" value="F:aspartate-tRNA ligase activity"/>
    <property type="evidence" value="ECO:0007669"/>
    <property type="project" value="UniProtKB-UniRule"/>
</dbReference>
<dbReference type="GO" id="GO:0050560">
    <property type="term" value="F:aspartate-tRNA(Asn) ligase activity"/>
    <property type="evidence" value="ECO:0007669"/>
    <property type="project" value="UniProtKB-EC"/>
</dbReference>
<dbReference type="GO" id="GO:0005524">
    <property type="term" value="F:ATP binding"/>
    <property type="evidence" value="ECO:0007669"/>
    <property type="project" value="UniProtKB-UniRule"/>
</dbReference>
<dbReference type="GO" id="GO:0003676">
    <property type="term" value="F:nucleic acid binding"/>
    <property type="evidence" value="ECO:0007669"/>
    <property type="project" value="InterPro"/>
</dbReference>
<dbReference type="GO" id="GO:0006422">
    <property type="term" value="P:aspartyl-tRNA aminoacylation"/>
    <property type="evidence" value="ECO:0007669"/>
    <property type="project" value="UniProtKB-UniRule"/>
</dbReference>
<dbReference type="CDD" id="cd00777">
    <property type="entry name" value="AspRS_core"/>
    <property type="match status" value="1"/>
</dbReference>
<dbReference type="CDD" id="cd04317">
    <property type="entry name" value="EcAspRS_like_N"/>
    <property type="match status" value="1"/>
</dbReference>
<dbReference type="Gene3D" id="3.30.930.10">
    <property type="entry name" value="Bira Bifunctional Protein, Domain 2"/>
    <property type="match status" value="1"/>
</dbReference>
<dbReference type="Gene3D" id="3.30.1360.30">
    <property type="entry name" value="GAD-like domain"/>
    <property type="match status" value="1"/>
</dbReference>
<dbReference type="Gene3D" id="2.40.50.140">
    <property type="entry name" value="Nucleic acid-binding proteins"/>
    <property type="match status" value="1"/>
</dbReference>
<dbReference type="HAMAP" id="MF_00044">
    <property type="entry name" value="Asp_tRNA_synth_type1"/>
    <property type="match status" value="1"/>
</dbReference>
<dbReference type="InterPro" id="IPR004364">
    <property type="entry name" value="Aa-tRNA-synt_II"/>
</dbReference>
<dbReference type="InterPro" id="IPR006195">
    <property type="entry name" value="aa-tRNA-synth_II"/>
</dbReference>
<dbReference type="InterPro" id="IPR045864">
    <property type="entry name" value="aa-tRNA-synth_II/BPL/LPL"/>
</dbReference>
<dbReference type="InterPro" id="IPR004524">
    <property type="entry name" value="Asp-tRNA-ligase_1"/>
</dbReference>
<dbReference type="InterPro" id="IPR047089">
    <property type="entry name" value="Asp-tRNA-ligase_1_N"/>
</dbReference>
<dbReference type="InterPro" id="IPR002312">
    <property type="entry name" value="Asp/Asn-tRNA-synth_IIb"/>
</dbReference>
<dbReference type="InterPro" id="IPR047090">
    <property type="entry name" value="AspRS_core"/>
</dbReference>
<dbReference type="InterPro" id="IPR004115">
    <property type="entry name" value="GAD-like_sf"/>
</dbReference>
<dbReference type="InterPro" id="IPR029351">
    <property type="entry name" value="GAD_dom"/>
</dbReference>
<dbReference type="InterPro" id="IPR012340">
    <property type="entry name" value="NA-bd_OB-fold"/>
</dbReference>
<dbReference type="InterPro" id="IPR004365">
    <property type="entry name" value="NA-bd_OB_tRNA"/>
</dbReference>
<dbReference type="NCBIfam" id="TIGR00459">
    <property type="entry name" value="aspS_bact"/>
    <property type="match status" value="1"/>
</dbReference>
<dbReference type="NCBIfam" id="NF001750">
    <property type="entry name" value="PRK00476.1"/>
    <property type="match status" value="1"/>
</dbReference>
<dbReference type="PANTHER" id="PTHR22594:SF5">
    <property type="entry name" value="ASPARTATE--TRNA LIGASE, MITOCHONDRIAL"/>
    <property type="match status" value="1"/>
</dbReference>
<dbReference type="PANTHER" id="PTHR22594">
    <property type="entry name" value="ASPARTYL/LYSYL-TRNA SYNTHETASE"/>
    <property type="match status" value="1"/>
</dbReference>
<dbReference type="Pfam" id="PF02938">
    <property type="entry name" value="GAD"/>
    <property type="match status" value="1"/>
</dbReference>
<dbReference type="Pfam" id="PF00152">
    <property type="entry name" value="tRNA-synt_2"/>
    <property type="match status" value="1"/>
</dbReference>
<dbReference type="Pfam" id="PF01336">
    <property type="entry name" value="tRNA_anti-codon"/>
    <property type="match status" value="1"/>
</dbReference>
<dbReference type="PRINTS" id="PR01042">
    <property type="entry name" value="TRNASYNTHASP"/>
</dbReference>
<dbReference type="SUPFAM" id="SSF55681">
    <property type="entry name" value="Class II aaRS and biotin synthetases"/>
    <property type="match status" value="1"/>
</dbReference>
<dbReference type="SUPFAM" id="SSF55261">
    <property type="entry name" value="GAD domain-like"/>
    <property type="match status" value="1"/>
</dbReference>
<dbReference type="SUPFAM" id="SSF50249">
    <property type="entry name" value="Nucleic acid-binding proteins"/>
    <property type="match status" value="1"/>
</dbReference>
<dbReference type="PROSITE" id="PS50862">
    <property type="entry name" value="AA_TRNA_LIGASE_II"/>
    <property type="match status" value="1"/>
</dbReference>
<feature type="chain" id="PRO_1000090976" description="Aspartate--tRNA(Asp/Asn) ligase">
    <location>
        <begin position="1"/>
        <end position="603"/>
    </location>
</feature>
<feature type="region of interest" description="Aspartate" evidence="1">
    <location>
        <begin position="211"/>
        <end position="214"/>
    </location>
</feature>
<feature type="binding site" evidence="1">
    <location>
        <position position="187"/>
    </location>
    <ligand>
        <name>L-aspartate</name>
        <dbReference type="ChEBI" id="CHEBI:29991"/>
    </ligand>
</feature>
<feature type="binding site" evidence="1">
    <location>
        <begin position="233"/>
        <end position="235"/>
    </location>
    <ligand>
        <name>ATP</name>
        <dbReference type="ChEBI" id="CHEBI:30616"/>
    </ligand>
</feature>
<feature type="binding site" evidence="1">
    <location>
        <position position="233"/>
    </location>
    <ligand>
        <name>L-aspartate</name>
        <dbReference type="ChEBI" id="CHEBI:29991"/>
    </ligand>
</feature>
<feature type="binding site" evidence="1">
    <location>
        <position position="461"/>
    </location>
    <ligand>
        <name>L-aspartate</name>
        <dbReference type="ChEBI" id="CHEBI:29991"/>
    </ligand>
</feature>
<feature type="binding site" evidence="1">
    <location>
        <position position="495"/>
    </location>
    <ligand>
        <name>ATP</name>
        <dbReference type="ChEBI" id="CHEBI:30616"/>
    </ligand>
</feature>
<feature type="binding site" evidence="1">
    <location>
        <position position="502"/>
    </location>
    <ligand>
        <name>L-aspartate</name>
        <dbReference type="ChEBI" id="CHEBI:29991"/>
    </ligand>
</feature>
<feature type="binding site" evidence="1">
    <location>
        <begin position="547"/>
        <end position="550"/>
    </location>
    <ligand>
        <name>ATP</name>
        <dbReference type="ChEBI" id="CHEBI:30616"/>
    </ligand>
</feature>
<feature type="site" description="Important for tRNA non-discrimination" evidence="1">
    <location>
        <position position="44"/>
    </location>
</feature>
<comment type="function">
    <text evidence="1">Aspartyl-tRNA synthetase with relaxed tRNA specificity since it is able to aspartylate not only its cognate tRNA(Asp) but also tRNA(Asn). Reaction proceeds in two steps: L-aspartate is first activated by ATP to form Asp-AMP and then transferred to the acceptor end of tRNA(Asp/Asn).</text>
</comment>
<comment type="catalytic activity">
    <reaction evidence="1">
        <text>tRNA(Asx) + L-aspartate + ATP = L-aspartyl-tRNA(Asx) + AMP + diphosphate</text>
        <dbReference type="Rhea" id="RHEA:18349"/>
        <dbReference type="Rhea" id="RHEA-COMP:9710"/>
        <dbReference type="Rhea" id="RHEA-COMP:9711"/>
        <dbReference type="ChEBI" id="CHEBI:29991"/>
        <dbReference type="ChEBI" id="CHEBI:30616"/>
        <dbReference type="ChEBI" id="CHEBI:33019"/>
        <dbReference type="ChEBI" id="CHEBI:78442"/>
        <dbReference type="ChEBI" id="CHEBI:78516"/>
        <dbReference type="ChEBI" id="CHEBI:456215"/>
        <dbReference type="EC" id="6.1.1.23"/>
    </reaction>
</comment>
<comment type="subunit">
    <text evidence="1">Homodimer.</text>
</comment>
<comment type="subcellular location">
    <subcellularLocation>
        <location evidence="1">Cytoplasm</location>
    </subcellularLocation>
</comment>
<comment type="similarity">
    <text evidence="1">Belongs to the class-II aminoacyl-tRNA synthetase family. Type 1 subfamily.</text>
</comment>
<name>SYDND_CHLP8</name>
<reference key="1">
    <citation type="submission" date="2008-06" db="EMBL/GenBank/DDBJ databases">
        <title>Complete sequence of Chlorobaculum parvum NCIB 8327.</title>
        <authorList>
            <consortium name="US DOE Joint Genome Institute"/>
            <person name="Lucas S."/>
            <person name="Copeland A."/>
            <person name="Lapidus A."/>
            <person name="Glavina del Rio T."/>
            <person name="Dalin E."/>
            <person name="Tice H."/>
            <person name="Bruce D."/>
            <person name="Goodwin L."/>
            <person name="Pitluck S."/>
            <person name="Schmutz J."/>
            <person name="Larimer F."/>
            <person name="Land M."/>
            <person name="Hauser L."/>
            <person name="Kyrpides N."/>
            <person name="Mikhailova N."/>
            <person name="Zhao F."/>
            <person name="Li T."/>
            <person name="Liu Z."/>
            <person name="Overmann J."/>
            <person name="Bryant D.A."/>
            <person name="Richardson P."/>
        </authorList>
    </citation>
    <scope>NUCLEOTIDE SEQUENCE [LARGE SCALE GENOMIC DNA]</scope>
    <source>
        <strain>DSM 263 / NCIMB 8327</strain>
    </source>
</reference>
<keyword id="KW-0030">Aminoacyl-tRNA synthetase</keyword>
<keyword id="KW-0067">ATP-binding</keyword>
<keyword id="KW-0963">Cytoplasm</keyword>
<keyword id="KW-0436">Ligase</keyword>
<keyword id="KW-0547">Nucleotide-binding</keyword>
<keyword id="KW-0648">Protein biosynthesis</keyword>
<protein>
    <recommendedName>
        <fullName evidence="1">Aspartate--tRNA(Asp/Asn) ligase</fullName>
        <ecNumber evidence="1">6.1.1.23</ecNumber>
    </recommendedName>
    <alternativeName>
        <fullName evidence="1">Aspartyl-tRNA synthetase</fullName>
        <shortName evidence="1">AspRS</shortName>
    </alternativeName>
    <alternativeName>
        <fullName evidence="1">Non-discriminating aspartyl-tRNA synthetase</fullName>
        <shortName evidence="1">ND-AspRS</shortName>
    </alternativeName>
</protein>
<accession>B3QP90</accession>
<organism>
    <name type="scientific">Chlorobaculum parvum (strain DSM 263 / NCIMB 8327)</name>
    <name type="common">Chlorobium vibrioforme subsp. thiosulfatophilum</name>
    <dbReference type="NCBI Taxonomy" id="517417"/>
    <lineage>
        <taxon>Bacteria</taxon>
        <taxon>Pseudomonadati</taxon>
        <taxon>Chlorobiota</taxon>
        <taxon>Chlorobiia</taxon>
        <taxon>Chlorobiales</taxon>
        <taxon>Chlorobiaceae</taxon>
        <taxon>Chlorobaculum</taxon>
    </lineage>
</organism>
<proteinExistence type="inferred from homology"/>
<sequence>MSKEPTAAAGLQNRFRTHYCGLLNRDSEGAGVKLGGWVHRIRDHGGLIFIDLRDHTGICQLVIQPESGELFRIAEGLHSESVISAEGSVVLRSDETVNPRLASGAIEVVVSAIKIESAAHPLPFPVADYMPTSEELRLKYRFLDLRRERLHENIIFRSQLTAAVRKYLTDLDFIEIQTPILTSSSPEGARDFLVPSRLHPGKFYALPQAPQQFKQLLMVSGFPRYFQIAPCFRDEDARADRSPGEFYQVDIEMSFVEQDDLFVILEGMFKHLVETMTTKRIAQYPFPRISYKDVMNRYGSDKPDLRIPIEIQDVTELFVNSGFKVFASNTKEGCCVKAMVLKGMGNESRLFYDKAEKRARELGSAGLAYIQFKEEAPKGPVVKFLKEEEMAALKEQLGIETGDVVFFGAGKWEQTCKIMGGMRNYFADVFPLDRDELSFCWIVDFPMFEYNEEDKKIDFSHNPFSMPQGEMEALEQHSPLDILAYQYDIVCNGIELSSGAIRNHRPDIMYKAFEIAGYPHDEVDARFGHMIEAFKHGAPPHGGIAPGLDRLVMILRDEQNIREVIAFPMNQSAQDLMMAAPSEVTAQQLKELHIKVELPEEEA</sequence>
<evidence type="ECO:0000255" key="1">
    <source>
        <dbReference type="HAMAP-Rule" id="MF_00044"/>
    </source>
</evidence>